<evidence type="ECO:0000305" key="1"/>
<reference key="1">
    <citation type="journal article" date="2002" name="Nature">
        <title>Comparison of the genomes of two Xanthomonas pathogens with differing host specificities.</title>
        <authorList>
            <person name="da Silva A.C.R."/>
            <person name="Ferro J.A."/>
            <person name="Reinach F.C."/>
            <person name="Farah C.S."/>
            <person name="Furlan L.R."/>
            <person name="Quaggio R.B."/>
            <person name="Monteiro-Vitorello C.B."/>
            <person name="Van Sluys M.A."/>
            <person name="Almeida N.F. Jr."/>
            <person name="Alves L.M.C."/>
            <person name="do Amaral A.M."/>
            <person name="Bertolini M.C."/>
            <person name="Camargo L.E.A."/>
            <person name="Camarotte G."/>
            <person name="Cannavan F."/>
            <person name="Cardozo J."/>
            <person name="Chambergo F."/>
            <person name="Ciapina L.P."/>
            <person name="Cicarelli R.M.B."/>
            <person name="Coutinho L.L."/>
            <person name="Cursino-Santos J.R."/>
            <person name="El-Dorry H."/>
            <person name="Faria J.B."/>
            <person name="Ferreira A.J.S."/>
            <person name="Ferreira R.C.C."/>
            <person name="Ferro M.I.T."/>
            <person name="Formighieri E.F."/>
            <person name="Franco M.C."/>
            <person name="Greggio C.C."/>
            <person name="Gruber A."/>
            <person name="Katsuyama A.M."/>
            <person name="Kishi L.T."/>
            <person name="Leite R.P."/>
            <person name="Lemos E.G.M."/>
            <person name="Lemos M.V.F."/>
            <person name="Locali E.C."/>
            <person name="Machado M.A."/>
            <person name="Madeira A.M.B.N."/>
            <person name="Martinez-Rossi N.M."/>
            <person name="Martins E.C."/>
            <person name="Meidanis J."/>
            <person name="Menck C.F.M."/>
            <person name="Miyaki C.Y."/>
            <person name="Moon D.H."/>
            <person name="Moreira L.M."/>
            <person name="Novo M.T.M."/>
            <person name="Okura V.K."/>
            <person name="Oliveira M.C."/>
            <person name="Oliveira V.R."/>
            <person name="Pereira H.A."/>
            <person name="Rossi A."/>
            <person name="Sena J.A.D."/>
            <person name="Silva C."/>
            <person name="de Souza R.F."/>
            <person name="Spinola L.A.F."/>
            <person name="Takita M.A."/>
            <person name="Tamura R.E."/>
            <person name="Teixeira E.C."/>
            <person name="Tezza R.I.D."/>
            <person name="Trindade dos Santos M."/>
            <person name="Truffi D."/>
            <person name="Tsai S.M."/>
            <person name="White F.F."/>
            <person name="Setubal J.C."/>
            <person name="Kitajima J.P."/>
        </authorList>
    </citation>
    <scope>NUCLEOTIDE SEQUENCE [LARGE SCALE GENOMIC DNA]</scope>
    <source>
        <strain>306</strain>
    </source>
</reference>
<comment type="similarity">
    <text evidence="1">Belongs to the UPF0337 (CsbD) family.</text>
</comment>
<organism>
    <name type="scientific">Xanthomonas axonopodis pv. citri (strain 306)</name>
    <dbReference type="NCBI Taxonomy" id="190486"/>
    <lineage>
        <taxon>Bacteria</taxon>
        <taxon>Pseudomonadati</taxon>
        <taxon>Pseudomonadota</taxon>
        <taxon>Gammaproteobacteria</taxon>
        <taxon>Lysobacterales</taxon>
        <taxon>Lysobacteraceae</taxon>
        <taxon>Xanthomonas</taxon>
    </lineage>
</organism>
<feature type="chain" id="PRO_0000210060" description="UPF0337 protein XAC4007">
    <location>
        <begin position="1"/>
        <end position="69"/>
    </location>
</feature>
<name>Y4007_XANAC</name>
<protein>
    <recommendedName>
        <fullName>UPF0337 protein XAC4007</fullName>
    </recommendedName>
</protein>
<sequence length="69" mass="7982">MNSDIISGKWTQLKGKAQAKWGDLTDDDFKVAEGNAEYLQGKLQERYGWDRDRAQTEVRAFEKSLRDDT</sequence>
<dbReference type="EMBL" id="AE008923">
    <property type="protein sequence ID" value="AAM38843.1"/>
    <property type="molecule type" value="Genomic_DNA"/>
</dbReference>
<dbReference type="RefSeq" id="WP_003486601.1">
    <property type="nucleotide sequence ID" value="NC_003919.1"/>
</dbReference>
<dbReference type="SMR" id="Q8PFH4"/>
<dbReference type="KEGG" id="xac:XAC4007"/>
<dbReference type="eggNOG" id="COG3237">
    <property type="taxonomic scope" value="Bacteria"/>
</dbReference>
<dbReference type="HOGENOM" id="CLU_135567_4_1_6"/>
<dbReference type="Proteomes" id="UP000000576">
    <property type="component" value="Chromosome"/>
</dbReference>
<dbReference type="Gene3D" id="1.10.1470.10">
    <property type="entry name" value="YjbJ"/>
    <property type="match status" value="1"/>
</dbReference>
<dbReference type="InterPro" id="IPR008462">
    <property type="entry name" value="CsbD"/>
</dbReference>
<dbReference type="InterPro" id="IPR050423">
    <property type="entry name" value="UPF0337_stress_rsp"/>
</dbReference>
<dbReference type="InterPro" id="IPR026042">
    <property type="entry name" value="YjbJ"/>
</dbReference>
<dbReference type="InterPro" id="IPR036629">
    <property type="entry name" value="YjbJ_sf"/>
</dbReference>
<dbReference type="PANTHER" id="PTHR34977">
    <property type="entry name" value="UPF0337 PROTEIN YJBJ"/>
    <property type="match status" value="1"/>
</dbReference>
<dbReference type="PANTHER" id="PTHR34977:SF1">
    <property type="entry name" value="UPF0337 PROTEIN YJBJ"/>
    <property type="match status" value="1"/>
</dbReference>
<dbReference type="Pfam" id="PF05532">
    <property type="entry name" value="CsbD"/>
    <property type="match status" value="1"/>
</dbReference>
<dbReference type="PIRSF" id="PIRSF039008">
    <property type="entry name" value="YjbJ"/>
    <property type="match status" value="1"/>
</dbReference>
<dbReference type="SUPFAM" id="SSF69047">
    <property type="entry name" value="Hypothetical protein YjbJ"/>
    <property type="match status" value="1"/>
</dbReference>
<gene>
    <name type="ordered locus">XAC4007</name>
</gene>
<proteinExistence type="inferred from homology"/>
<accession>Q8PFH4</accession>